<reference key="1">
    <citation type="journal article" date="1990" name="Proc. Natl. Acad. Sci. U.S.A.">
        <title>Wound-induced accumulation of mRNA containing a hevein sequence in laticifers of rubber tree (Hevea brasiliensis).</title>
        <authorList>
            <person name="Broekaert W.F."/>
            <person name="Lee H.I."/>
            <person name="Kush A."/>
            <person name="Chua N.H."/>
            <person name="Raikhel N."/>
        </authorList>
    </citation>
    <scope>NUCLEOTIDE SEQUENCE [MRNA]</scope>
</reference>
<reference key="2">
    <citation type="book" date="1975" name="Proceedings of the international rubber conference">
        <title>Amino-acid sequence of hevein.</title>
        <authorList>
            <person name="Walujono K."/>
            <person name="Scholma R.A."/>
            <person name="Beintema J.J."/>
            <person name="Mariono A."/>
            <person name="Hahn A.M."/>
        </authorList>
    </citation>
    <scope>PROTEIN SEQUENCE OF 18-60</scope>
    <source>
        <tissue>Latex</tissue>
    </source>
</reference>
<reference key="3">
    <citation type="submission" date="1977-06" db="PIR data bank">
        <authorList>
            <person name="Beintema J.J."/>
        </authorList>
    </citation>
    <scope>SEQUENCE REVISION TO 51-52</scope>
</reference>
<reference key="4">
    <citation type="journal article" date="1991" name="J. Biol. Chem.">
        <title>Co- and post-translational processing of the hevein preproprotein of latex of the rubber tree (Hevea brasiliensis).</title>
        <authorList>
            <person name="Lee H.-I."/>
            <person name="Broekaert W.F."/>
            <person name="Raikhel N.V."/>
        </authorList>
    </citation>
    <scope>PROTEIN SEQUENCE OF 18-26 AND 67-77</scope>
    <scope>PROTEOLYTIC PROCESSING</scope>
    <source>
        <tissue>Latex</tissue>
    </source>
</reference>
<reference key="5">
    <citation type="journal article" date="1998" name="J. Biomed. Sci.">
        <title>Characterization of latex allergenic components by capillary zone electrophoresis and N-terminal sequence analysis.</title>
        <authorList>
            <person name="Chen H.-D."/>
            <person name="Chen C.-L."/>
            <person name="Huang S.-W."/>
            <person name="Kung H.-F."/>
            <person name="Chen H.-C."/>
        </authorList>
    </citation>
    <scope>PROTEIN SEQUENCE OF 18-35</scope>
    <source>
        <tissue>Latex</tissue>
    </source>
</reference>
<reference key="6">
    <citation type="journal article" date="1991" name="FEBS Lett.">
        <title>Crystal structure of hevein at 2.8-A resolution.</title>
        <authorList>
            <person name="Rodriguez-Romero A."/>
            <person name="Ravichandran K.G."/>
            <person name="Soriano-Garcia M."/>
        </authorList>
    </citation>
    <scope>X-RAY CRYSTALLOGRAPHY (2.8 ANGSTROMS) OF 18-60</scope>
</reference>
<reference key="7">
    <citation type="journal article" date="1993" name="Biochemistry">
        <title>Hevein: NMR assignment and assessment of solution-state folding for the agglutinin-toxin motif.</title>
        <authorList>
            <person name="Andersen N.H."/>
            <person name="Cao B."/>
            <person name="Rodriguez-Romero A."/>
            <person name="Arreguin B."/>
        </authorList>
    </citation>
    <scope>STRUCTURE BY NMR OF 18-60</scope>
    <scope>DISULFIDE BONDS</scope>
</reference>
<gene>
    <name type="primary">HEV1</name>
</gene>
<comment type="function">
    <text>N-acetyl-D-glucosamine / N-acetyl-D-neuraminic acid binding lectin. Can inhibit fungal growth.</text>
</comment>
<comment type="tissue specificity">
    <text>Laticifer.</text>
</comment>
<comment type="PTM">
    <text evidence="3">Proteolytically processed to yield the two chains of the mature protein.</text>
</comment>
<comment type="allergen">
    <text>Causes an allergic reaction in human.</text>
</comment>
<organism>
    <name type="scientific">Hevea brasiliensis</name>
    <name type="common">Para rubber tree</name>
    <name type="synonym">Siphonia brasiliensis</name>
    <dbReference type="NCBI Taxonomy" id="3981"/>
    <lineage>
        <taxon>Eukaryota</taxon>
        <taxon>Viridiplantae</taxon>
        <taxon>Streptophyta</taxon>
        <taxon>Embryophyta</taxon>
        <taxon>Tracheophyta</taxon>
        <taxon>Spermatophyta</taxon>
        <taxon>Magnoliopsida</taxon>
        <taxon>eudicotyledons</taxon>
        <taxon>Gunneridae</taxon>
        <taxon>Pentapetalae</taxon>
        <taxon>rosids</taxon>
        <taxon>fabids</taxon>
        <taxon>Malpighiales</taxon>
        <taxon>Euphorbiaceae</taxon>
        <taxon>Crotonoideae</taxon>
        <taxon>Micrandreae</taxon>
        <taxon>Hevea</taxon>
    </lineage>
</organism>
<dbReference type="EMBL" id="M36986">
    <property type="protein sequence ID" value="AAA33357.1"/>
    <property type="molecule type" value="mRNA"/>
</dbReference>
<dbReference type="PIR" id="A38288">
    <property type="entry name" value="HVHV"/>
</dbReference>
<dbReference type="PDB" id="1HEV">
    <property type="method" value="NMR"/>
    <property type="chains" value="A=18-60"/>
</dbReference>
<dbReference type="PDB" id="1Q9B">
    <property type="method" value="X-ray"/>
    <property type="resolution" value="1.50 A"/>
    <property type="chains" value="A=18-60"/>
</dbReference>
<dbReference type="PDB" id="1T0W">
    <property type="method" value="NMR"/>
    <property type="chains" value="A=18-49"/>
</dbReference>
<dbReference type="PDB" id="1WKX">
    <property type="method" value="X-ray"/>
    <property type="resolution" value="1.70 A"/>
    <property type="chains" value="A=18-60"/>
</dbReference>
<dbReference type="PDB" id="4WP4">
    <property type="method" value="X-ray"/>
    <property type="resolution" value="1.43 A"/>
    <property type="chains" value="A=18-60"/>
</dbReference>
<dbReference type="PDBsum" id="1HEV"/>
<dbReference type="PDBsum" id="1Q9B"/>
<dbReference type="PDBsum" id="1T0W"/>
<dbReference type="PDBsum" id="1WKX"/>
<dbReference type="PDBsum" id="4WP4"/>
<dbReference type="BMRB" id="P02877"/>
<dbReference type="SMR" id="P02877"/>
<dbReference type="Allergome" id="390">
    <property type="allergen name" value="Hev b 6"/>
</dbReference>
<dbReference type="Allergome" id="391">
    <property type="allergen name" value="Hev b 6.01"/>
</dbReference>
<dbReference type="Allergome" id="392">
    <property type="allergen name" value="Hev b 6.02"/>
</dbReference>
<dbReference type="Allergome" id="393">
    <property type="allergen name" value="Hev b 6.03"/>
</dbReference>
<dbReference type="CAZy" id="CBM18">
    <property type="family name" value="Carbohydrate-Binding Module Family 18"/>
</dbReference>
<dbReference type="UniLectin" id="P02877"/>
<dbReference type="ABCD" id="P02877">
    <property type="antibodies" value="3 sequenced antibodies"/>
</dbReference>
<dbReference type="EvolutionaryTrace" id="P02877"/>
<dbReference type="GO" id="GO:0008061">
    <property type="term" value="F:chitin binding"/>
    <property type="evidence" value="ECO:0007669"/>
    <property type="project" value="UniProtKB-KW"/>
</dbReference>
<dbReference type="GO" id="GO:0004540">
    <property type="term" value="F:RNA nuclease activity"/>
    <property type="evidence" value="ECO:0007669"/>
    <property type="project" value="InterPro"/>
</dbReference>
<dbReference type="GO" id="GO:0042742">
    <property type="term" value="P:defense response to bacterium"/>
    <property type="evidence" value="ECO:0007669"/>
    <property type="project" value="InterPro"/>
</dbReference>
<dbReference type="GO" id="GO:0050832">
    <property type="term" value="P:defense response to fungus"/>
    <property type="evidence" value="ECO:0007669"/>
    <property type="project" value="InterPro"/>
</dbReference>
<dbReference type="CDD" id="cd06921">
    <property type="entry name" value="ChtBD1_GH19_hevein"/>
    <property type="match status" value="1"/>
</dbReference>
<dbReference type="CDD" id="cd22777">
    <property type="entry name" value="DPBB_barwin-like"/>
    <property type="match status" value="1"/>
</dbReference>
<dbReference type="FunFam" id="3.30.60.10:FF:000001">
    <property type="entry name" value="Basic endochitinase"/>
    <property type="match status" value="1"/>
</dbReference>
<dbReference type="FunFam" id="2.40.40.10:FF:000007">
    <property type="entry name" value="Papaya barwin-like protein"/>
    <property type="match status" value="1"/>
</dbReference>
<dbReference type="Gene3D" id="3.30.60.10">
    <property type="entry name" value="Endochitinase-like"/>
    <property type="match status" value="1"/>
</dbReference>
<dbReference type="Gene3D" id="2.40.40.10">
    <property type="entry name" value="RlpA-like domain"/>
    <property type="match status" value="1"/>
</dbReference>
<dbReference type="InterPro" id="IPR018226">
    <property type="entry name" value="Barwin_CS"/>
</dbReference>
<dbReference type="InterPro" id="IPR001153">
    <property type="entry name" value="Barwin_dom"/>
</dbReference>
<dbReference type="InterPro" id="IPR001002">
    <property type="entry name" value="Chitin-bd_1"/>
</dbReference>
<dbReference type="InterPro" id="IPR018371">
    <property type="entry name" value="Chitin-binding_1_CS"/>
</dbReference>
<dbReference type="InterPro" id="IPR036861">
    <property type="entry name" value="Endochitinase-like_sf"/>
</dbReference>
<dbReference type="InterPro" id="IPR044301">
    <property type="entry name" value="PR4"/>
</dbReference>
<dbReference type="InterPro" id="IPR036908">
    <property type="entry name" value="RlpA-like_sf"/>
</dbReference>
<dbReference type="PANTHER" id="PTHR46351:SF7">
    <property type="entry name" value="HEVEIN-LIKE PREPROPROTEIN"/>
    <property type="match status" value="1"/>
</dbReference>
<dbReference type="PANTHER" id="PTHR46351">
    <property type="entry name" value="WOUND-INDUCED PROTEIN WIN2"/>
    <property type="match status" value="1"/>
</dbReference>
<dbReference type="Pfam" id="PF00967">
    <property type="entry name" value="Barwin"/>
    <property type="match status" value="1"/>
</dbReference>
<dbReference type="Pfam" id="PF00187">
    <property type="entry name" value="Chitin_bind_1"/>
    <property type="match status" value="1"/>
</dbReference>
<dbReference type="PRINTS" id="PR00602">
    <property type="entry name" value="BARWIN"/>
</dbReference>
<dbReference type="PRINTS" id="PR00451">
    <property type="entry name" value="CHITINBINDNG"/>
</dbReference>
<dbReference type="SMART" id="SM00270">
    <property type="entry name" value="ChtBD1"/>
    <property type="match status" value="1"/>
</dbReference>
<dbReference type="SUPFAM" id="SSF50685">
    <property type="entry name" value="Barwin-like endoglucanases"/>
    <property type="match status" value="1"/>
</dbReference>
<dbReference type="SUPFAM" id="SSF57016">
    <property type="entry name" value="Plant lectins/antimicrobial peptides"/>
    <property type="match status" value="1"/>
</dbReference>
<dbReference type="PROSITE" id="PS00771">
    <property type="entry name" value="BARWIN_1"/>
    <property type="match status" value="1"/>
</dbReference>
<dbReference type="PROSITE" id="PS00772">
    <property type="entry name" value="BARWIN_2"/>
    <property type="match status" value="1"/>
</dbReference>
<dbReference type="PROSITE" id="PS51174">
    <property type="entry name" value="BARWIN_3"/>
    <property type="match status" value="1"/>
</dbReference>
<dbReference type="PROSITE" id="PS00026">
    <property type="entry name" value="CHIT_BIND_I_1"/>
    <property type="match status" value="1"/>
</dbReference>
<dbReference type="PROSITE" id="PS50941">
    <property type="entry name" value="CHIT_BIND_I_2"/>
    <property type="match status" value="1"/>
</dbReference>
<protein>
    <recommendedName>
        <fullName>Pro-hevein</fullName>
    </recommendedName>
    <alternativeName>
        <fullName>Major hevein</fullName>
    </alternativeName>
    <component>
        <recommendedName>
            <fullName>Hevein</fullName>
        </recommendedName>
        <allergenName>Hev b 6</allergenName>
    </component>
    <component>
        <recommendedName>
            <fullName>Win-like protein</fullName>
        </recommendedName>
    </component>
</protein>
<name>HEVE_HEVBR</name>
<proteinExistence type="evidence at protein level"/>
<evidence type="ECO:0000255" key="1">
    <source>
        <dbReference type="PROSITE-ProRule" id="PRU00261"/>
    </source>
</evidence>
<evidence type="ECO:0000255" key="2">
    <source>
        <dbReference type="PROSITE-ProRule" id="PRU00527"/>
    </source>
</evidence>
<evidence type="ECO:0000269" key="3">
    <source>
    </source>
</evidence>
<evidence type="ECO:0000269" key="4">
    <source>
    </source>
</evidence>
<evidence type="ECO:0000269" key="5">
    <source>
    </source>
</evidence>
<evidence type="ECO:0000269" key="6">
    <source ref="2"/>
</evidence>
<evidence type="ECO:0007829" key="7">
    <source>
        <dbReference type="PDB" id="1T0W"/>
    </source>
</evidence>
<evidence type="ECO:0007829" key="8">
    <source>
        <dbReference type="PDB" id="4WP4"/>
    </source>
</evidence>
<accession>P02877</accession>
<sequence length="204" mass="21859">MNIFIVVLLCLTGVAIAEQCGRQAGGKLCPNNLCCSQWGWCGSTDEYCSPDHNCQSNCKDSGEGVGGGSASNVLATYHLYNSQDHGWDLNAASAYCSTWDANKPYSWRSKYGWTAFCGPVGAHGQSSCGKCLSVTNTGTGAKTTVRIVDQCSNGGLDLDVNVFRQLDTDGKGYERGHITVNYQFVDCGDSFNPLFSVMKSSVIN</sequence>
<keyword id="KW-0002">3D-structure</keyword>
<keyword id="KW-0020">Allergen</keyword>
<keyword id="KW-0147">Chitin-binding</keyword>
<keyword id="KW-0903">Direct protein sequencing</keyword>
<keyword id="KW-1015">Disulfide bond</keyword>
<keyword id="KW-0732">Signal</keyword>
<feature type="signal peptide" evidence="3 5 6">
    <location>
        <begin position="1"/>
        <end position="17"/>
    </location>
</feature>
<feature type="chain" id="PRO_0000005280" description="Pro-hevein">
    <location>
        <begin position="18"/>
        <end position="204"/>
    </location>
</feature>
<feature type="chain" id="PRO_0000005281" description="Hevein">
    <location>
        <begin position="18"/>
        <end position="60"/>
    </location>
</feature>
<feature type="propeptide" id="PRO_0000005282" evidence="3">
    <location>
        <begin position="61"/>
        <end position="66"/>
    </location>
</feature>
<feature type="chain" id="PRO_0000005283" description="Win-like protein">
    <location>
        <begin position="67"/>
        <end position="204"/>
    </location>
</feature>
<feature type="domain" description="Chitin-binding type-1" evidence="1">
    <location>
        <begin position="18"/>
        <end position="60"/>
    </location>
</feature>
<feature type="domain" description="Barwin" evidence="2">
    <location>
        <begin position="68"/>
        <end position="189"/>
    </location>
</feature>
<feature type="disulfide bond" evidence="1 4">
    <location>
        <begin position="20"/>
        <end position="35"/>
    </location>
</feature>
<feature type="disulfide bond" evidence="1 4">
    <location>
        <begin position="29"/>
        <end position="41"/>
    </location>
</feature>
<feature type="disulfide bond" evidence="1 4">
    <location>
        <begin position="34"/>
        <end position="48"/>
    </location>
</feature>
<feature type="disulfide bond" evidence="1 4">
    <location>
        <begin position="54"/>
        <end position="58"/>
    </location>
</feature>
<feature type="disulfide bond" evidence="1">
    <location>
        <begin position="96"/>
        <end position="128"/>
    </location>
</feature>
<feature type="disulfide bond" evidence="1">
    <location>
        <begin position="117"/>
        <end position="151"/>
    </location>
</feature>
<feature type="disulfide bond" evidence="1">
    <location>
        <begin position="131"/>
        <end position="187"/>
    </location>
</feature>
<feature type="sequence variant" description="Possible deamidation.">
    <original>N</original>
    <variation>D</variation>
    <location>
        <position position="31"/>
    </location>
</feature>
<feature type="sequence variant">
    <original>V</original>
    <variation>M</variation>
    <location>
        <position position="73"/>
    </location>
</feature>
<feature type="helix" evidence="8">
    <location>
        <begin position="22"/>
        <end position="24"/>
    </location>
</feature>
<feature type="helix" evidence="8">
    <location>
        <begin position="30"/>
        <end position="32"/>
    </location>
</feature>
<feature type="strand" evidence="7">
    <location>
        <begin position="37"/>
        <end position="39"/>
    </location>
</feature>
<feature type="strand" evidence="8">
    <location>
        <begin position="41"/>
        <end position="44"/>
    </location>
</feature>
<feature type="helix" evidence="8">
    <location>
        <begin position="45"/>
        <end position="48"/>
    </location>
</feature>
<feature type="helix" evidence="8">
    <location>
        <begin position="50"/>
        <end position="52"/>
    </location>
</feature>